<reference key="1">
    <citation type="submission" date="2013-04" db="EMBL/GenBank/DDBJ databases">
        <title>The Genome Sequence of Bilophila wadsworthia 3_1_6.</title>
        <authorList>
            <consortium name="The Broad Institute Genomics Platform"/>
            <person name="Earl A."/>
            <person name="Ward D."/>
            <person name="Feldgarden M."/>
            <person name="Gevers D."/>
            <person name="Sibley C."/>
            <person name="Strauss J."/>
            <person name="Allen-Vercoe E."/>
            <person name="Walker B."/>
            <person name="Young S."/>
            <person name="Zeng Q."/>
            <person name="Gargeya S."/>
            <person name="Fitzgerald M."/>
            <person name="Haas B."/>
            <person name="Abouelleil A."/>
            <person name="Allen A.W."/>
            <person name="Alvarado L."/>
            <person name="Arachchi H.M."/>
            <person name="Berlin A.M."/>
            <person name="Chapman S.B."/>
            <person name="Gainer-Dewar J."/>
            <person name="Goldberg J."/>
            <person name="Griggs A."/>
            <person name="Gujja S."/>
            <person name="Hansen M."/>
            <person name="Howarth C."/>
            <person name="Imamovic A."/>
            <person name="Ireland A."/>
            <person name="Larimer J."/>
            <person name="McCowan C."/>
            <person name="Murphy C."/>
            <person name="Pearson M."/>
            <person name="Poon T.W."/>
            <person name="Priest M."/>
            <person name="Roberts A."/>
            <person name="Saif S."/>
            <person name="Shea T."/>
            <person name="Sisk P."/>
            <person name="Sykes S."/>
            <person name="Wortman J."/>
            <person name="Nusbaum C."/>
            <person name="Birren B."/>
        </authorList>
    </citation>
    <scope>NUCLEOTIDE SEQUENCE [LARGE SCALE GENOMIC DNA]</scope>
    <source>
        <strain>3_1_6</strain>
    </source>
</reference>
<reference key="2">
    <citation type="journal article" date="2019" name="Proc. Natl. Acad. Sci. U.S.A.">
        <title>A glycyl radical enzyme enables hydrogen sulfide production by the human intestinal bacterium Bilophila wadsworthia.</title>
        <authorList>
            <person name="Peck S.C."/>
            <person name="Denger K."/>
            <person name="Burrichter A."/>
            <person name="Irwin S.M."/>
            <person name="Balskus E.P."/>
            <person name="Schleheck D."/>
        </authorList>
    </citation>
    <scope>FUNCTION</scope>
    <scope>CATALYTIC ACTIVITY</scope>
    <scope>BIOPHYSICOCHEMICAL PROPERTIES</scope>
    <scope>SUBSTRATE SPECIFICITY</scope>
    <scope>INDUCTION</scope>
    <scope>PATHWAY</scope>
    <source>
        <strain>3_1_6</strain>
    </source>
</reference>
<name>ISLA_BILW3</name>
<protein>
    <recommendedName>
        <fullName evidence="6">Isethionate sulfite-lyase</fullName>
        <ecNumber evidence="5">4.4.1.38</ecNumber>
    </recommendedName>
    <alternativeName>
        <fullName evidence="6">Glycyl radical enzyme IslA</fullName>
        <shortName evidence="6">GRE IslA</shortName>
    </alternativeName>
</protein>
<keyword id="KW-0002">3D-structure</keyword>
<keyword id="KW-0456">Lyase</keyword>
<keyword id="KW-0556">Organic radical</keyword>
<keyword id="KW-1185">Reference proteome</keyword>
<comment type="function">
    <text evidence="5">Involved in an anaerobic respiration pathway that converts the sulfonate taurine (2-aminoethanesulfonate) to ammonia, acetate and sulfide. Catalyzes the radical-mediated C-S bond cleavage of isethionate (2-hydroxyethanesulfonate) to form sulfite and acetaldehyde. Is not able to use any alternate organosulfonate or (S)-1,2-propanediol or choline as a substrate, showing that this enzyme is highly specific for isethionate.</text>
</comment>
<comment type="catalytic activity">
    <reaction evidence="5">
        <text>2-hydroxyethane-1-sulfonate = acetaldehyde + sulfite + H(+)</text>
        <dbReference type="Rhea" id="RHEA:60452"/>
        <dbReference type="ChEBI" id="CHEBI:15343"/>
        <dbReference type="ChEBI" id="CHEBI:15378"/>
        <dbReference type="ChEBI" id="CHEBI:17359"/>
        <dbReference type="ChEBI" id="CHEBI:61904"/>
        <dbReference type="EC" id="4.4.1.38"/>
    </reaction>
    <physiologicalReaction direction="left-to-right" evidence="8">
        <dbReference type="Rhea" id="RHEA:60453"/>
    </physiologicalReaction>
</comment>
<comment type="biophysicochemical properties">
    <kinetics>
        <KM evidence="5">8.1 mM for 2-hydroxyethane-1-sulfonate</KM>
        <text evidence="5">kcat is 14 sec(-1).</text>
    </kinetics>
</comment>
<comment type="pathway">
    <text evidence="8">Organosulfur degradation; alkanesulfonate degradation.</text>
</comment>
<comment type="subunit">
    <text evidence="2">Homodimer.</text>
</comment>
<comment type="induction">
    <text evidence="5">Highly up-regulated in the presence of taurine or isethionate.</text>
</comment>
<comment type="PTM">
    <text evidence="5">Requires the activating protein IslB to generate the key active site glycyl radical on Gly-805 that is involved in catalysis.</text>
</comment>
<comment type="miscellaneous">
    <text evidence="8">Taurine is an abundant dietary and host-derived molecule whose metabolism to hydrogen sulfide (H2S) by members of the human gut microbiota has many prominent connections to host health and disease. The human gut bacterium and opportunistic pathogen Bilophila wadsworthia produces H2S when respiring sulfite (HSO3-) released from organosulfonate substrates such as taurine and isethionate.</text>
</comment>
<comment type="similarity">
    <text evidence="7">Belongs to the glycyl radical enzyme (GRE) family.</text>
</comment>
<organism>
    <name type="scientific">Bilophila wadsworthia (strain 3_1_6)</name>
    <dbReference type="NCBI Taxonomy" id="563192"/>
    <lineage>
        <taxon>Bacteria</taxon>
        <taxon>Pseudomonadati</taxon>
        <taxon>Thermodesulfobacteriota</taxon>
        <taxon>Desulfovibrionia</taxon>
        <taxon>Desulfovibrionales</taxon>
        <taxon>Desulfovibrionaceae</taxon>
        <taxon>Bilophila</taxon>
    </lineage>
</organism>
<evidence type="ECO:0000250" key="1">
    <source>
        <dbReference type="UniProtKB" id="Q30W70"/>
    </source>
</evidence>
<evidence type="ECO:0000250" key="2">
    <source>
        <dbReference type="UniProtKB" id="Q727N1"/>
    </source>
</evidence>
<evidence type="ECO:0000255" key="3">
    <source>
        <dbReference type="PROSITE-ProRule" id="PRU00493"/>
    </source>
</evidence>
<evidence type="ECO:0000255" key="4">
    <source>
        <dbReference type="PROSITE-ProRule" id="PRU00887"/>
    </source>
</evidence>
<evidence type="ECO:0000269" key="5">
    <source>
    </source>
</evidence>
<evidence type="ECO:0000303" key="6">
    <source>
    </source>
</evidence>
<evidence type="ECO:0000305" key="7"/>
<evidence type="ECO:0000305" key="8">
    <source>
    </source>
</evidence>
<evidence type="ECO:0000312" key="9">
    <source>
        <dbReference type="EMBL" id="EFV45544.1"/>
    </source>
</evidence>
<evidence type="ECO:0007829" key="10">
    <source>
        <dbReference type="PDB" id="7KQ3"/>
    </source>
</evidence>
<evidence type="ECO:0007829" key="11">
    <source>
        <dbReference type="PDB" id="7KQ4"/>
    </source>
</evidence>
<gene>
    <name evidence="6" type="primary">islA</name>
    <name type="synonym">iseG</name>
    <name evidence="9" type="ORF">HMPREF0179_00639</name>
</gene>
<dbReference type="EC" id="4.4.1.38" evidence="5"/>
<dbReference type="EMBL" id="ADCP02000001">
    <property type="protein sequence ID" value="EFV45544.1"/>
    <property type="molecule type" value="Genomic_DNA"/>
</dbReference>
<dbReference type="PDB" id="7KQ3">
    <property type="method" value="X-ray"/>
    <property type="resolution" value="2.69 A"/>
    <property type="chains" value="A/B/C/D=1-830"/>
</dbReference>
<dbReference type="PDB" id="7KQ4">
    <property type="method" value="X-ray"/>
    <property type="resolution" value="2.26 A"/>
    <property type="chains" value="A/B=1-830"/>
</dbReference>
<dbReference type="PDBsum" id="7KQ3"/>
<dbReference type="PDBsum" id="7KQ4"/>
<dbReference type="SMR" id="E5Y378"/>
<dbReference type="STRING" id="563192.HMPREF0179_00639"/>
<dbReference type="GeneID" id="78085781"/>
<dbReference type="eggNOG" id="COG1882">
    <property type="taxonomic scope" value="Bacteria"/>
</dbReference>
<dbReference type="HOGENOM" id="CLU_009096_0_1_7"/>
<dbReference type="OrthoDB" id="9803969at2"/>
<dbReference type="BioCyc" id="MetaCyc:MONOMER-20851"/>
<dbReference type="BRENDA" id="4.4.1.38">
    <property type="organism ID" value="856"/>
</dbReference>
<dbReference type="UniPathway" id="UPA00338"/>
<dbReference type="Proteomes" id="UP000006034">
    <property type="component" value="Unassembled WGS sequence"/>
</dbReference>
<dbReference type="GO" id="GO:0005829">
    <property type="term" value="C:cytosol"/>
    <property type="evidence" value="ECO:0007669"/>
    <property type="project" value="TreeGrafter"/>
</dbReference>
<dbReference type="GO" id="GO:0016829">
    <property type="term" value="F:lyase activity"/>
    <property type="evidence" value="ECO:0007669"/>
    <property type="project" value="UniProtKB-KW"/>
</dbReference>
<dbReference type="GO" id="GO:0046306">
    <property type="term" value="P:alkanesulfonate catabolic process"/>
    <property type="evidence" value="ECO:0007669"/>
    <property type="project" value="UniProtKB-UniPathway"/>
</dbReference>
<dbReference type="CDD" id="cd01677">
    <property type="entry name" value="PFL2_DhaB_BssA"/>
    <property type="match status" value="1"/>
</dbReference>
<dbReference type="Gene3D" id="3.20.70.20">
    <property type="match status" value="1"/>
</dbReference>
<dbReference type="InterPro" id="IPR019777">
    <property type="entry name" value="Form_AcTrfase_GR_CS"/>
</dbReference>
<dbReference type="InterPro" id="IPR001150">
    <property type="entry name" value="Gly_radical"/>
</dbReference>
<dbReference type="InterPro" id="IPR051215">
    <property type="entry name" value="GRE"/>
</dbReference>
<dbReference type="InterPro" id="IPR004184">
    <property type="entry name" value="PFL_dom"/>
</dbReference>
<dbReference type="PANTHER" id="PTHR43641:SF2">
    <property type="entry name" value="DEHYDRATASE YBIW-RELATED"/>
    <property type="match status" value="1"/>
</dbReference>
<dbReference type="PANTHER" id="PTHR43641">
    <property type="entry name" value="FORMATE ACETYLTRANSFERASE 3-RELATED"/>
    <property type="match status" value="1"/>
</dbReference>
<dbReference type="Pfam" id="PF01228">
    <property type="entry name" value="Gly_radical"/>
    <property type="match status" value="1"/>
</dbReference>
<dbReference type="Pfam" id="PF02901">
    <property type="entry name" value="PFL-like"/>
    <property type="match status" value="1"/>
</dbReference>
<dbReference type="SUPFAM" id="SSF51998">
    <property type="entry name" value="PFL-like glycyl radical enzymes"/>
    <property type="match status" value="1"/>
</dbReference>
<dbReference type="PROSITE" id="PS00850">
    <property type="entry name" value="GLY_RADICAL_1"/>
    <property type="match status" value="1"/>
</dbReference>
<dbReference type="PROSITE" id="PS51149">
    <property type="entry name" value="GLY_RADICAL_2"/>
    <property type="match status" value="1"/>
</dbReference>
<dbReference type="PROSITE" id="PS51554">
    <property type="entry name" value="PFL"/>
    <property type="match status" value="1"/>
</dbReference>
<proteinExistence type="evidence at protein level"/>
<accession>E5Y378</accession>
<sequence length="830" mass="93965">MTQVAEIKSPHEQRLEDNIAGKEDIYRESHKRVFKLLERFDGQKPAIDVERALYFTQSMAETVGQPLVLRWAKALMNVAKNITVMVQDDQLLLGRCGGHDGRYGILYPELDGDFLDIAVRDLPTRPQSPASISPEDAKIVVEQIAPFWKGRTYHEALNKALPAEVHKLTYDDPDGLISRFIVNETSSFRSSIQWVHDYEVVLKRGFNGLKQEMEEKLAALDPASPVDQVDKRPFIEATILVCDAIVLWAKRHADAARKAAEACADPVRKAELIRMAENAEHVPANPARDFYEAVQSQYFTQMFSRLEQKTGTTISNGRMDQYFYPFYKKDMEAGILTDEKTLEYLECMWVGMAEFIDMYISPAGGAFNEGYAHWEAVTIGGQTPDGRDATNDLTYLFLKSKREFPLHYPDLAARIHSRAPERYLWDVAETIKFGSGFPKLCNDEECIPLYVSKGATFEEALDYAVSGCIEIRMPNRDTYTSGGAYTNFASAVEMALYDGKMKKYGDVQLGIQTGDARKFKSWDEFWNAYVQQHMLLLRTTFIQQYIVIQTRAKHFAQPMGSVLHALCRKHCIDLHQPQIPEGLNFGYFEFMGLGTVIDSLAAIKKLVFEDKKLTMDQLIDALEANFEGYEDIQQLLRTAPCYGNDDEYADEIGRELDRMAVSFAAKYGKEMGINNDARYVPFTSHVPFGKVVSATPNGRVAWFPLADGSSPSHGADHNGPTAILLSNHNTKNYGMRARAARLINVKFTPKCVEGDAGTEKLVQFIRTWCDLKLWHIQFNVINADTLKKAQKDPQKYRNLIVRIAGYSAYFVDLTPDLQNDLIARTGHDQM</sequence>
<feature type="chain" id="PRO_0000450941" description="Isethionate sulfite-lyase">
    <location>
        <begin position="1"/>
        <end position="830"/>
    </location>
</feature>
<feature type="domain" description="PFL" evidence="4">
    <location>
        <begin position="31"/>
        <end position="700"/>
    </location>
</feature>
<feature type="domain" description="Glycine radical" evidence="3">
    <location>
        <begin position="707"/>
        <end position="830"/>
    </location>
</feature>
<feature type="active site" description="Cysteine radical intermediate" evidence="1">
    <location>
        <position position="468"/>
    </location>
</feature>
<feature type="active site" description="Proton acceptor" evidence="1">
    <location>
        <position position="470"/>
    </location>
</feature>
<feature type="binding site" evidence="2">
    <location>
        <position position="189"/>
    </location>
    <ligand>
        <name>2-hydroxyethane-1-sulfonate</name>
        <dbReference type="ChEBI" id="CHEBI:61904"/>
    </ligand>
</feature>
<feature type="binding site" evidence="2">
    <location>
        <position position="193"/>
    </location>
    <ligand>
        <name>2-hydroxyethane-1-sulfonate</name>
        <dbReference type="ChEBI" id="CHEBI:61904"/>
    </ligand>
</feature>
<feature type="binding site" evidence="2">
    <location>
        <begin position="468"/>
        <end position="470"/>
    </location>
    <ligand>
        <name>2-hydroxyethane-1-sulfonate</name>
        <dbReference type="ChEBI" id="CHEBI:61904"/>
    </ligand>
</feature>
<feature type="binding site" evidence="2">
    <location>
        <position position="678"/>
    </location>
    <ligand>
        <name>2-hydroxyethane-1-sulfonate</name>
        <dbReference type="ChEBI" id="CHEBI:61904"/>
    </ligand>
</feature>
<feature type="modified residue" description="Glycine radical" evidence="3">
    <location>
        <position position="805"/>
    </location>
</feature>
<feature type="helix" evidence="11">
    <location>
        <begin position="10"/>
        <end position="20"/>
    </location>
</feature>
<feature type="helix" evidence="11">
    <location>
        <begin position="27"/>
        <end position="29"/>
    </location>
</feature>
<feature type="helix" evidence="11">
    <location>
        <begin position="31"/>
        <end position="37"/>
    </location>
</feature>
<feature type="turn" evidence="10">
    <location>
        <begin position="38"/>
        <end position="42"/>
    </location>
</feature>
<feature type="strand" evidence="10">
    <location>
        <begin position="46"/>
        <end position="48"/>
    </location>
</feature>
<feature type="helix" evidence="11">
    <location>
        <begin position="50"/>
        <end position="59"/>
    </location>
</feature>
<feature type="helix" evidence="11">
    <location>
        <begin position="67"/>
        <end position="81"/>
    </location>
</feature>
<feature type="strand" evidence="11">
    <location>
        <begin position="96"/>
        <end position="98"/>
    </location>
</feature>
<feature type="strand" evidence="11">
    <location>
        <begin position="100"/>
        <end position="104"/>
    </location>
</feature>
<feature type="helix" evidence="11">
    <location>
        <begin position="108"/>
        <end position="111"/>
    </location>
</feature>
<feature type="helix" evidence="11">
    <location>
        <begin position="112"/>
        <end position="114"/>
    </location>
</feature>
<feature type="helix" evidence="11">
    <location>
        <begin position="115"/>
        <end position="121"/>
    </location>
</feature>
<feature type="helix" evidence="11">
    <location>
        <begin position="122"/>
        <end position="124"/>
    </location>
</feature>
<feature type="strand" evidence="11">
    <location>
        <begin position="126"/>
        <end position="128"/>
    </location>
</feature>
<feature type="helix" evidence="11">
    <location>
        <begin position="134"/>
        <end position="143"/>
    </location>
</feature>
<feature type="helix" evidence="11">
    <location>
        <begin position="145"/>
        <end position="148"/>
    </location>
</feature>
<feature type="turn" evidence="11">
    <location>
        <begin position="149"/>
        <end position="151"/>
    </location>
</feature>
<feature type="helix" evidence="11">
    <location>
        <begin position="153"/>
        <end position="160"/>
    </location>
</feature>
<feature type="helix" evidence="11">
    <location>
        <begin position="163"/>
        <end position="169"/>
    </location>
</feature>
<feature type="strand" evidence="11">
    <location>
        <begin position="170"/>
        <end position="172"/>
    </location>
</feature>
<feature type="strand" evidence="11">
    <location>
        <begin position="180"/>
        <end position="184"/>
    </location>
</feature>
<feature type="strand" evidence="11">
    <location>
        <begin position="188"/>
        <end position="192"/>
    </location>
</feature>
<feature type="helix" evidence="11">
    <location>
        <begin position="198"/>
        <end position="219"/>
    </location>
</feature>
<feature type="helix" evidence="11">
    <location>
        <begin position="225"/>
        <end position="229"/>
    </location>
</feature>
<feature type="helix" evidence="11">
    <location>
        <begin position="231"/>
        <end position="262"/>
    </location>
</feature>
<feature type="helix" evidence="11">
    <location>
        <begin position="266"/>
        <end position="281"/>
    </location>
</feature>
<feature type="turn" evidence="11">
    <location>
        <begin position="282"/>
        <end position="284"/>
    </location>
</feature>
<feature type="helix" evidence="11">
    <location>
        <begin position="290"/>
        <end position="307"/>
    </location>
</feature>
<feature type="helix" evidence="11">
    <location>
        <begin position="319"/>
        <end position="322"/>
    </location>
</feature>
<feature type="helix" evidence="11">
    <location>
        <begin position="324"/>
        <end position="332"/>
    </location>
</feature>
<feature type="helix" evidence="11">
    <location>
        <begin position="338"/>
        <end position="354"/>
    </location>
</feature>
<feature type="helix" evidence="11">
    <location>
        <begin position="362"/>
        <end position="366"/>
    </location>
</feature>
<feature type="turn" evidence="11">
    <location>
        <begin position="369"/>
        <end position="371"/>
    </location>
</feature>
<feature type="strand" evidence="11">
    <location>
        <begin position="376"/>
        <end position="382"/>
    </location>
</feature>
<feature type="strand" evidence="11">
    <location>
        <begin position="386"/>
        <end position="388"/>
    </location>
</feature>
<feature type="helix" evidence="11">
    <location>
        <begin position="392"/>
        <end position="403"/>
    </location>
</feature>
<feature type="strand" evidence="11">
    <location>
        <begin position="409"/>
        <end position="415"/>
    </location>
</feature>
<feature type="helix" evidence="11">
    <location>
        <begin position="421"/>
        <end position="431"/>
    </location>
</feature>
<feature type="strand" evidence="11">
    <location>
        <begin position="439"/>
        <end position="442"/>
    </location>
</feature>
<feature type="helix" evidence="11">
    <location>
        <begin position="443"/>
        <end position="452"/>
    </location>
</feature>
<feature type="helix" evidence="11">
    <location>
        <begin position="457"/>
        <end position="461"/>
    </location>
</feature>
<feature type="strand" evidence="11">
    <location>
        <begin position="464"/>
        <end position="466"/>
    </location>
</feature>
<feature type="turn" evidence="11">
    <location>
        <begin position="467"/>
        <end position="469"/>
    </location>
</feature>
<feature type="strand" evidence="11">
    <location>
        <begin position="470"/>
        <end position="472"/>
    </location>
</feature>
<feature type="turn" evidence="11">
    <location>
        <begin position="474"/>
        <end position="476"/>
    </location>
</feature>
<feature type="strand" evidence="11">
    <location>
        <begin position="484"/>
        <end position="487"/>
    </location>
</feature>
<feature type="helix" evidence="11">
    <location>
        <begin position="488"/>
        <end position="496"/>
    </location>
</feature>
<feature type="helix" evidence="11">
    <location>
        <begin position="502"/>
        <end position="504"/>
    </location>
</feature>
<feature type="helix" evidence="10">
    <location>
        <begin position="516"/>
        <end position="518"/>
    </location>
</feature>
<feature type="helix" evidence="11">
    <location>
        <begin position="522"/>
        <end position="551"/>
    </location>
</feature>
<feature type="turn" evidence="11">
    <location>
        <begin position="552"/>
        <end position="554"/>
    </location>
</feature>
<feature type="helix" evidence="11">
    <location>
        <begin position="558"/>
        <end position="562"/>
    </location>
</feature>
<feature type="helix" evidence="11">
    <location>
        <begin position="565"/>
        <end position="570"/>
    </location>
</feature>
<feature type="strand" evidence="11">
    <location>
        <begin position="585"/>
        <end position="591"/>
    </location>
</feature>
<feature type="helix" evidence="11">
    <location>
        <begin position="593"/>
        <end position="606"/>
    </location>
</feature>
<feature type="turn" evidence="11">
    <location>
        <begin position="607"/>
        <end position="609"/>
    </location>
</feature>
<feature type="helix" evidence="11">
    <location>
        <begin position="615"/>
        <end position="623"/>
    </location>
</feature>
<feature type="turn" evidence="11">
    <location>
        <begin position="624"/>
        <end position="628"/>
    </location>
</feature>
<feature type="helix" evidence="11">
    <location>
        <begin position="630"/>
        <end position="636"/>
    </location>
</feature>
<feature type="helix" evidence="11">
    <location>
        <begin position="647"/>
        <end position="667"/>
    </location>
</feature>
<feature type="helix" evidence="11">
    <location>
        <begin position="669"/>
        <end position="671"/>
    </location>
</feature>
<feature type="strand" evidence="11">
    <location>
        <begin position="673"/>
        <end position="679"/>
    </location>
</feature>
<feature type="turn" evidence="11">
    <location>
        <begin position="682"/>
        <end position="684"/>
    </location>
</feature>
<feature type="helix" evidence="11">
    <location>
        <begin position="685"/>
        <end position="690"/>
    </location>
</feature>
<feature type="helix" evidence="11">
    <location>
        <begin position="721"/>
        <end position="729"/>
    </location>
</feature>
<feature type="strand" evidence="11">
    <location>
        <begin position="738"/>
        <end position="741"/>
    </location>
</feature>
<feature type="strand" evidence="11">
    <location>
        <begin position="744"/>
        <end position="747"/>
    </location>
</feature>
<feature type="helix" evidence="11">
    <location>
        <begin position="750"/>
        <end position="752"/>
    </location>
</feature>
<feature type="helix" evidence="11">
    <location>
        <begin position="754"/>
        <end position="770"/>
    </location>
</feature>
<feature type="strand" evidence="11">
    <location>
        <begin position="775"/>
        <end position="780"/>
    </location>
</feature>
<feature type="helix" evidence="11">
    <location>
        <begin position="783"/>
        <end position="791"/>
    </location>
</feature>
<feature type="turn" evidence="11">
    <location>
        <begin position="793"/>
        <end position="798"/>
    </location>
</feature>
<feature type="strand" evidence="11">
    <location>
        <begin position="800"/>
        <end position="802"/>
    </location>
</feature>
<feature type="strand" evidence="11">
    <location>
        <begin position="804"/>
        <end position="809"/>
    </location>
</feature>
<feature type="helix" evidence="11">
    <location>
        <begin position="810"/>
        <end position="812"/>
    </location>
</feature>
<feature type="helix" evidence="11">
    <location>
        <begin position="815"/>
        <end position="823"/>
    </location>
</feature>
<feature type="strand" evidence="11">
    <location>
        <begin position="826"/>
        <end position="828"/>
    </location>
</feature>